<comment type="catalytic activity">
    <reaction evidence="1">
        <text>tRNA(Lys) + L-lysine + ATP = L-lysyl-tRNA(Lys) + AMP + diphosphate</text>
        <dbReference type="Rhea" id="RHEA:20792"/>
        <dbReference type="Rhea" id="RHEA-COMP:9696"/>
        <dbReference type="Rhea" id="RHEA-COMP:9697"/>
        <dbReference type="ChEBI" id="CHEBI:30616"/>
        <dbReference type="ChEBI" id="CHEBI:32551"/>
        <dbReference type="ChEBI" id="CHEBI:33019"/>
        <dbReference type="ChEBI" id="CHEBI:78442"/>
        <dbReference type="ChEBI" id="CHEBI:78529"/>
        <dbReference type="ChEBI" id="CHEBI:456215"/>
        <dbReference type="EC" id="6.1.1.6"/>
    </reaction>
</comment>
<comment type="cofactor">
    <cofactor evidence="1">
        <name>Mg(2+)</name>
        <dbReference type="ChEBI" id="CHEBI:18420"/>
    </cofactor>
    <text evidence="1">Binds 3 Mg(2+) ions per subunit.</text>
</comment>
<comment type="subunit">
    <text evidence="1">Homodimer.</text>
</comment>
<comment type="subcellular location">
    <subcellularLocation>
        <location evidence="1">Cytoplasm</location>
    </subcellularLocation>
</comment>
<comment type="similarity">
    <text evidence="1">Belongs to the class-II aminoacyl-tRNA synthetase family.</text>
</comment>
<reference key="1">
    <citation type="submission" date="2004-11" db="EMBL/GenBank/DDBJ databases">
        <title>Complete genome sequence of Thermus thermophilus HB8.</title>
        <authorList>
            <person name="Masui R."/>
            <person name="Kurokawa K."/>
            <person name="Nakagawa N."/>
            <person name="Tokunaga F."/>
            <person name="Koyama Y."/>
            <person name="Shibata T."/>
            <person name="Oshima T."/>
            <person name="Yokoyama S."/>
            <person name="Yasunaga T."/>
            <person name="Kuramitsu S."/>
        </authorList>
    </citation>
    <scope>NUCLEOTIDE SEQUENCE [LARGE SCALE GENOMIC DNA]</scope>
    <source>
        <strain>ATCC 27634 / DSM 579 / HB8</strain>
    </source>
</reference>
<keyword id="KW-0030">Aminoacyl-tRNA synthetase</keyword>
<keyword id="KW-0067">ATP-binding</keyword>
<keyword id="KW-0963">Cytoplasm</keyword>
<keyword id="KW-0436">Ligase</keyword>
<keyword id="KW-0460">Magnesium</keyword>
<keyword id="KW-0479">Metal-binding</keyword>
<keyword id="KW-0547">Nucleotide-binding</keyword>
<keyword id="KW-0648">Protein biosynthesis</keyword>
<keyword id="KW-1185">Reference proteome</keyword>
<protein>
    <recommendedName>
        <fullName evidence="1">Lysine--tRNA ligase</fullName>
        <ecNumber evidence="1">6.1.1.6</ecNumber>
    </recommendedName>
    <alternativeName>
        <fullName evidence="1">Lysyl-tRNA synthetase</fullName>
        <shortName evidence="1">LysRS</shortName>
    </alternativeName>
</protein>
<evidence type="ECO:0000255" key="1">
    <source>
        <dbReference type="HAMAP-Rule" id="MF_00252"/>
    </source>
</evidence>
<accession>Q5SJG7</accession>
<gene>
    <name evidence="1" type="primary">lysS</name>
    <name type="ordered locus">TTHA1041</name>
</gene>
<dbReference type="EC" id="6.1.1.6" evidence="1"/>
<dbReference type="EMBL" id="AP008226">
    <property type="protein sequence ID" value="BAD70864.1"/>
    <property type="molecule type" value="Genomic_DNA"/>
</dbReference>
<dbReference type="RefSeq" id="WP_011173121.1">
    <property type="nucleotide sequence ID" value="NC_006461.1"/>
</dbReference>
<dbReference type="RefSeq" id="YP_144307.1">
    <property type="nucleotide sequence ID" value="NC_006461.1"/>
</dbReference>
<dbReference type="SMR" id="Q5SJG7"/>
<dbReference type="EnsemblBacteria" id="BAD70864">
    <property type="protein sequence ID" value="BAD70864"/>
    <property type="gene ID" value="BAD70864"/>
</dbReference>
<dbReference type="GeneID" id="3170107"/>
<dbReference type="KEGG" id="ttj:TTHA1041"/>
<dbReference type="PATRIC" id="fig|300852.9.peg.1021"/>
<dbReference type="eggNOG" id="COG1190">
    <property type="taxonomic scope" value="Bacteria"/>
</dbReference>
<dbReference type="HOGENOM" id="CLU_008255_6_0_0"/>
<dbReference type="PhylomeDB" id="Q5SJG7"/>
<dbReference type="Proteomes" id="UP000000532">
    <property type="component" value="Chromosome"/>
</dbReference>
<dbReference type="GO" id="GO:0005829">
    <property type="term" value="C:cytosol"/>
    <property type="evidence" value="ECO:0007669"/>
    <property type="project" value="TreeGrafter"/>
</dbReference>
<dbReference type="GO" id="GO:0005524">
    <property type="term" value="F:ATP binding"/>
    <property type="evidence" value="ECO:0007669"/>
    <property type="project" value="UniProtKB-UniRule"/>
</dbReference>
<dbReference type="GO" id="GO:0004824">
    <property type="term" value="F:lysine-tRNA ligase activity"/>
    <property type="evidence" value="ECO:0007669"/>
    <property type="project" value="UniProtKB-UniRule"/>
</dbReference>
<dbReference type="GO" id="GO:0000287">
    <property type="term" value="F:magnesium ion binding"/>
    <property type="evidence" value="ECO:0007669"/>
    <property type="project" value="UniProtKB-UniRule"/>
</dbReference>
<dbReference type="GO" id="GO:0000049">
    <property type="term" value="F:tRNA binding"/>
    <property type="evidence" value="ECO:0007669"/>
    <property type="project" value="TreeGrafter"/>
</dbReference>
<dbReference type="GO" id="GO:0006430">
    <property type="term" value="P:lysyl-tRNA aminoacylation"/>
    <property type="evidence" value="ECO:0007669"/>
    <property type="project" value="UniProtKB-UniRule"/>
</dbReference>
<dbReference type="CDD" id="cd00775">
    <property type="entry name" value="LysRS_core"/>
    <property type="match status" value="1"/>
</dbReference>
<dbReference type="CDD" id="cd04322">
    <property type="entry name" value="LysRS_N"/>
    <property type="match status" value="1"/>
</dbReference>
<dbReference type="FunFam" id="2.40.50.140:FF:000024">
    <property type="entry name" value="Lysine--tRNA ligase"/>
    <property type="match status" value="1"/>
</dbReference>
<dbReference type="Gene3D" id="3.30.930.10">
    <property type="entry name" value="Bira Bifunctional Protein, Domain 2"/>
    <property type="match status" value="1"/>
</dbReference>
<dbReference type="Gene3D" id="2.40.50.140">
    <property type="entry name" value="Nucleic acid-binding proteins"/>
    <property type="match status" value="1"/>
</dbReference>
<dbReference type="HAMAP" id="MF_00252">
    <property type="entry name" value="Lys_tRNA_synth_class2"/>
    <property type="match status" value="1"/>
</dbReference>
<dbReference type="InterPro" id="IPR004364">
    <property type="entry name" value="Aa-tRNA-synt_II"/>
</dbReference>
<dbReference type="InterPro" id="IPR006195">
    <property type="entry name" value="aa-tRNA-synth_II"/>
</dbReference>
<dbReference type="InterPro" id="IPR045864">
    <property type="entry name" value="aa-tRNA-synth_II/BPL/LPL"/>
</dbReference>
<dbReference type="InterPro" id="IPR002313">
    <property type="entry name" value="Lys-tRNA-ligase_II"/>
</dbReference>
<dbReference type="InterPro" id="IPR044136">
    <property type="entry name" value="Lys-tRNA-ligase_II_N"/>
</dbReference>
<dbReference type="InterPro" id="IPR018149">
    <property type="entry name" value="Lys-tRNA-synth_II_C"/>
</dbReference>
<dbReference type="InterPro" id="IPR012340">
    <property type="entry name" value="NA-bd_OB-fold"/>
</dbReference>
<dbReference type="InterPro" id="IPR004365">
    <property type="entry name" value="NA-bd_OB_tRNA"/>
</dbReference>
<dbReference type="NCBIfam" id="TIGR00499">
    <property type="entry name" value="lysS_bact"/>
    <property type="match status" value="1"/>
</dbReference>
<dbReference type="NCBIfam" id="NF001756">
    <property type="entry name" value="PRK00484.1"/>
    <property type="match status" value="1"/>
</dbReference>
<dbReference type="PANTHER" id="PTHR42918:SF15">
    <property type="entry name" value="LYSINE--TRNA LIGASE, CHLOROPLASTIC_MITOCHONDRIAL"/>
    <property type="match status" value="1"/>
</dbReference>
<dbReference type="PANTHER" id="PTHR42918">
    <property type="entry name" value="LYSYL-TRNA SYNTHETASE"/>
    <property type="match status" value="1"/>
</dbReference>
<dbReference type="Pfam" id="PF00152">
    <property type="entry name" value="tRNA-synt_2"/>
    <property type="match status" value="1"/>
</dbReference>
<dbReference type="Pfam" id="PF01336">
    <property type="entry name" value="tRNA_anti-codon"/>
    <property type="match status" value="1"/>
</dbReference>
<dbReference type="PRINTS" id="PR00982">
    <property type="entry name" value="TRNASYNTHLYS"/>
</dbReference>
<dbReference type="SUPFAM" id="SSF55681">
    <property type="entry name" value="Class II aaRS and biotin synthetases"/>
    <property type="match status" value="1"/>
</dbReference>
<dbReference type="SUPFAM" id="SSF50249">
    <property type="entry name" value="Nucleic acid-binding proteins"/>
    <property type="match status" value="1"/>
</dbReference>
<dbReference type="PROSITE" id="PS50862">
    <property type="entry name" value="AA_TRNA_LIGASE_II"/>
    <property type="match status" value="1"/>
</dbReference>
<sequence length="492" mass="56921">MNDQTRQRLLNLEALVEAGFAPYPYRFPKTHSAEAILKAKRGAPPESEWPEEEVAVAGRLVALRRMGKVTFAHLLDETGRIQLYFQRDLTPKYELLKKLDVGDILGVRGHPFTTKTGEVTVKVLDWTPLVKSLHPLPDKWHGLRDKEVRYRQRYLDLIVNPEVREVFRRRSEIVRYIRRFFEAKGFLEVETPILQPTTGGAEARPFKTYHNALDHEFYLRISLELYLKRLLVGGYEKVFEIGRNFRNEGIDHNHNPEFTMLEAYWAYADYQDMAGLVEELLSGLVLHLFGSHEVPYQGRVLNFKPPFRRISFVEALKEKAGLPFDPLDLERLRLWADAHHPELSQVPNYKLLDKLFGIYVEPELQDPTFVFDFPLAISPLAKRHREKPGLVERWDLYAGGMELAPCYSELNDPLDQRERFLEQARRRKEGDEEAPEPDEDFLLALEYGMPPAAGLGLGIDRLAMLLTDQPSLRDVLLFPLLKPKKEAVEEGV</sequence>
<name>SYK_THET8</name>
<proteinExistence type="inferred from homology"/>
<organism>
    <name type="scientific">Thermus thermophilus (strain ATCC 27634 / DSM 579 / HB8)</name>
    <dbReference type="NCBI Taxonomy" id="300852"/>
    <lineage>
        <taxon>Bacteria</taxon>
        <taxon>Thermotogati</taxon>
        <taxon>Deinococcota</taxon>
        <taxon>Deinococci</taxon>
        <taxon>Thermales</taxon>
        <taxon>Thermaceae</taxon>
        <taxon>Thermus</taxon>
    </lineage>
</organism>
<feature type="chain" id="PRO_1000012960" description="Lysine--tRNA ligase">
    <location>
        <begin position="1"/>
        <end position="492"/>
    </location>
</feature>
<feature type="binding site" evidence="1">
    <location>
        <position position="395"/>
    </location>
    <ligand>
        <name>Mg(2+)</name>
        <dbReference type="ChEBI" id="CHEBI:18420"/>
        <label>1</label>
    </ligand>
</feature>
<feature type="binding site" evidence="1">
    <location>
        <position position="402"/>
    </location>
    <ligand>
        <name>Mg(2+)</name>
        <dbReference type="ChEBI" id="CHEBI:18420"/>
        <label>1</label>
    </ligand>
</feature>
<feature type="binding site" evidence="1">
    <location>
        <position position="402"/>
    </location>
    <ligand>
        <name>Mg(2+)</name>
        <dbReference type="ChEBI" id="CHEBI:18420"/>
        <label>2</label>
    </ligand>
</feature>